<dbReference type="EMBL" id="AY653733">
    <property type="protein sequence ID" value="AAV50880.1"/>
    <property type="molecule type" value="Genomic_DNA"/>
</dbReference>
<dbReference type="KEGG" id="vg:9925258"/>
<dbReference type="OrthoDB" id="12341at10239"/>
<dbReference type="Proteomes" id="UP000001134">
    <property type="component" value="Genome"/>
</dbReference>
<dbReference type="GO" id="GO:0005525">
    <property type="term" value="F:GTP binding"/>
    <property type="evidence" value="ECO:0007669"/>
    <property type="project" value="InterPro"/>
</dbReference>
<dbReference type="CDD" id="cd00882">
    <property type="entry name" value="Ras_like_GTPase"/>
    <property type="match status" value="1"/>
</dbReference>
<dbReference type="Gene3D" id="3.40.50.300">
    <property type="entry name" value="P-loop containing nucleotide triphosphate hydrolases"/>
    <property type="match status" value="1"/>
</dbReference>
<dbReference type="InterPro" id="IPR045063">
    <property type="entry name" value="Dynamin_N"/>
</dbReference>
<dbReference type="InterPro" id="IPR027417">
    <property type="entry name" value="P-loop_NTPase"/>
</dbReference>
<dbReference type="InterPro" id="IPR005225">
    <property type="entry name" value="Small_GTP-bd"/>
</dbReference>
<dbReference type="NCBIfam" id="TIGR00231">
    <property type="entry name" value="small_GTP"/>
    <property type="match status" value="1"/>
</dbReference>
<dbReference type="Pfam" id="PF00350">
    <property type="entry name" value="Dynamin_N"/>
    <property type="match status" value="1"/>
</dbReference>
<dbReference type="SUPFAM" id="SSF52540">
    <property type="entry name" value="P-loop containing nucleoside triphosphate hydrolases"/>
    <property type="match status" value="1"/>
</dbReference>
<organism>
    <name type="scientific">Acanthamoeba polyphaga mimivirus</name>
    <name type="common">APMV</name>
    <dbReference type="NCBI Taxonomy" id="212035"/>
    <lineage>
        <taxon>Viruses</taxon>
        <taxon>Varidnaviria</taxon>
        <taxon>Bamfordvirae</taxon>
        <taxon>Nucleocytoviricota</taxon>
        <taxon>Megaviricetes</taxon>
        <taxon>Imitervirales</taxon>
        <taxon>Mimiviridae</taxon>
        <taxon>Megamimivirinae</taxon>
        <taxon>Mimivirus</taxon>
        <taxon>Mimivirus bradfordmassiliense</taxon>
    </lineage>
</organism>
<accession>Q5UR66</accession>
<sequence>MKIENIEINIGIFGNVSVGKSSLVNCILGKKLSEIGYSKTTFVPQAYTNFGNREYHLESIRHLNEMANDQAKTINSTDKIKHVMHYIDKFSLLEDSRNGINDKIDSMFKIIIWDMPGFDTTHHGNMYLDWLSTNIKIFDIIVYVTEIMDDNLTMFDMLVSYVRKYDIKMICVVNKCDNMKLDKDSSVISLGTIDHDNRYIKINNTMANYATQYSIGNNNYITPFLPISVQNYEYFGNNLLLKNCDNDFGFEIFIASIINAINNHKLYFAVKHINRHIKVSKSKSMIDIIEYSRIVRKCNAQSRFIDISSGYNLSKYNLSENFWNLIRDTITSHASKIVQKCVKVVNDGKNIGFRSFDDVNIDIQVFLSFVNSVEIFKDFDDYPNDLVEYYRIKVISNLLNIYDVIADFEYTNQHYLDISNIFLYLELIKEHMRTEFDNYALKFIYTHRNIKTFESHYQESLINILKFIADNLSCCLSRNKFTSIVCMILINKQLYMKNKNNYLQYIISVKKLIKSVIKPTITINYIGPLDILIETTKKNVSIAISDNRLSSFYKQDINMFTVNNQLNNFYLGDTFDISVDFEKKLLELVKFE</sequence>
<protein>
    <recommendedName>
        <fullName>Uncharacterized protein R618</fullName>
    </recommendedName>
</protein>
<feature type="chain" id="PRO_0000244021" description="Uncharacterized protein R618">
    <location>
        <begin position="1"/>
        <end position="592"/>
    </location>
</feature>
<reference key="1">
    <citation type="journal article" date="2004" name="Science">
        <title>The 1.2-megabase genome sequence of Mimivirus.</title>
        <authorList>
            <person name="Raoult D."/>
            <person name="Audic S."/>
            <person name="Robert C."/>
            <person name="Abergel C."/>
            <person name="Renesto P."/>
            <person name="Ogata H."/>
            <person name="La Scola B."/>
            <person name="Susan M."/>
            <person name="Claverie J.-M."/>
        </authorList>
    </citation>
    <scope>NUCLEOTIDE SEQUENCE [LARGE SCALE GENOMIC DNA]</scope>
    <source>
        <strain>Rowbotham-Bradford</strain>
    </source>
</reference>
<keyword id="KW-1185">Reference proteome</keyword>
<name>YR618_MIMIV</name>
<proteinExistence type="predicted"/>
<organismHost>
    <name type="scientific">Acanthamoeba polyphaga</name>
    <name type="common">Amoeba</name>
    <dbReference type="NCBI Taxonomy" id="5757"/>
</organismHost>
<gene>
    <name type="ordered locus">MIMI_R618</name>
</gene>